<reference key="1">
    <citation type="journal article" date="2005" name="J. Bacteriol.">
        <title>The genome of Sulfolobus acidocaldarius, a model organism of the Crenarchaeota.</title>
        <authorList>
            <person name="Chen L."/>
            <person name="Bruegger K."/>
            <person name="Skovgaard M."/>
            <person name="Redder P."/>
            <person name="She Q."/>
            <person name="Torarinsson E."/>
            <person name="Greve B."/>
            <person name="Awayez M."/>
            <person name="Zibat A."/>
            <person name="Klenk H.-P."/>
            <person name="Garrett R.A."/>
        </authorList>
    </citation>
    <scope>NUCLEOTIDE SEQUENCE [LARGE SCALE GENOMIC DNA]</scope>
    <source>
        <strain>ATCC 33909 / DSM 639 / JCM 8929 / NBRC 15157 / NCIMB 11770</strain>
    </source>
</reference>
<evidence type="ECO:0000250" key="1"/>
<evidence type="ECO:0000255" key="2">
    <source>
        <dbReference type="HAMAP-Rule" id="MF_01109"/>
    </source>
</evidence>
<accession>Q4J8Z2</accession>
<comment type="function">
    <text evidence="1">Reversibly catalyzes the transfer of the carbamoyl group from carbamoyl phosphate (CP) to the N(epsilon) atom of ornithine (ORN) to produce L-citrulline.</text>
</comment>
<comment type="catalytic activity">
    <reaction evidence="2">
        <text>carbamoyl phosphate + L-ornithine = L-citrulline + phosphate + H(+)</text>
        <dbReference type="Rhea" id="RHEA:19513"/>
        <dbReference type="ChEBI" id="CHEBI:15378"/>
        <dbReference type="ChEBI" id="CHEBI:43474"/>
        <dbReference type="ChEBI" id="CHEBI:46911"/>
        <dbReference type="ChEBI" id="CHEBI:57743"/>
        <dbReference type="ChEBI" id="CHEBI:58228"/>
        <dbReference type="EC" id="2.1.3.3"/>
    </reaction>
</comment>
<comment type="pathway">
    <text evidence="2">Amino-acid biosynthesis; L-arginine biosynthesis; L-arginine from L-ornithine and carbamoyl phosphate: step 1/3.</text>
</comment>
<comment type="subcellular location">
    <subcellularLocation>
        <location evidence="2">Cytoplasm</location>
    </subcellularLocation>
</comment>
<comment type="similarity">
    <text evidence="2">Belongs to the aspartate/ornithine carbamoyltransferase superfamily. OTCase family.</text>
</comment>
<dbReference type="EC" id="2.1.3.3" evidence="2"/>
<dbReference type="EMBL" id="CP000077">
    <property type="protein sequence ID" value="AAY80738.1"/>
    <property type="molecule type" value="Genomic_DNA"/>
</dbReference>
<dbReference type="RefSeq" id="WP_011278240.1">
    <property type="nucleotide sequence ID" value="NC_007181.1"/>
</dbReference>
<dbReference type="SMR" id="Q4J8Z2"/>
<dbReference type="STRING" id="330779.Saci_1408"/>
<dbReference type="GeneID" id="14551907"/>
<dbReference type="GeneID" id="78441753"/>
<dbReference type="KEGG" id="sai:Saci_1408"/>
<dbReference type="PATRIC" id="fig|330779.12.peg.1356"/>
<dbReference type="eggNOG" id="arCOG00912">
    <property type="taxonomic scope" value="Archaea"/>
</dbReference>
<dbReference type="HOGENOM" id="CLU_043846_3_2_2"/>
<dbReference type="BioCyc" id="MetaCyc:MONOMER-18316"/>
<dbReference type="UniPathway" id="UPA00068">
    <property type="reaction ID" value="UER00112"/>
</dbReference>
<dbReference type="Proteomes" id="UP000001018">
    <property type="component" value="Chromosome"/>
</dbReference>
<dbReference type="GO" id="GO:0005737">
    <property type="term" value="C:cytoplasm"/>
    <property type="evidence" value="ECO:0007669"/>
    <property type="project" value="UniProtKB-SubCell"/>
</dbReference>
<dbReference type="GO" id="GO:0016597">
    <property type="term" value="F:amino acid binding"/>
    <property type="evidence" value="ECO:0007669"/>
    <property type="project" value="InterPro"/>
</dbReference>
<dbReference type="GO" id="GO:0004585">
    <property type="term" value="F:ornithine carbamoyltransferase activity"/>
    <property type="evidence" value="ECO:0007669"/>
    <property type="project" value="UniProtKB-UniRule"/>
</dbReference>
<dbReference type="GO" id="GO:0042450">
    <property type="term" value="P:arginine biosynthetic process via ornithine"/>
    <property type="evidence" value="ECO:0007669"/>
    <property type="project" value="TreeGrafter"/>
</dbReference>
<dbReference type="GO" id="GO:0019240">
    <property type="term" value="P:citrulline biosynthetic process"/>
    <property type="evidence" value="ECO:0007669"/>
    <property type="project" value="TreeGrafter"/>
</dbReference>
<dbReference type="GO" id="GO:0006526">
    <property type="term" value="P:L-arginine biosynthetic process"/>
    <property type="evidence" value="ECO:0007669"/>
    <property type="project" value="UniProtKB-UniRule"/>
</dbReference>
<dbReference type="FunFam" id="3.40.50.1370:FF:000008">
    <property type="entry name" value="Ornithine carbamoyltransferase"/>
    <property type="match status" value="1"/>
</dbReference>
<dbReference type="Gene3D" id="3.40.50.1370">
    <property type="entry name" value="Aspartate/ornithine carbamoyltransferase"/>
    <property type="match status" value="2"/>
</dbReference>
<dbReference type="HAMAP" id="MF_01109">
    <property type="entry name" value="OTCase"/>
    <property type="match status" value="1"/>
</dbReference>
<dbReference type="InterPro" id="IPR006132">
    <property type="entry name" value="Asp/Orn_carbamoyltranf_P-bd"/>
</dbReference>
<dbReference type="InterPro" id="IPR006130">
    <property type="entry name" value="Asp/Orn_carbamoylTrfase"/>
</dbReference>
<dbReference type="InterPro" id="IPR036901">
    <property type="entry name" value="Asp/Orn_carbamoylTrfase_sf"/>
</dbReference>
<dbReference type="InterPro" id="IPR006131">
    <property type="entry name" value="Asp_carbamoyltransf_Asp/Orn-bd"/>
</dbReference>
<dbReference type="InterPro" id="IPR002292">
    <property type="entry name" value="Orn/put_carbamltrans"/>
</dbReference>
<dbReference type="InterPro" id="IPR024904">
    <property type="entry name" value="OTCase_ArgI"/>
</dbReference>
<dbReference type="NCBIfam" id="TIGR00658">
    <property type="entry name" value="orni_carb_tr"/>
    <property type="match status" value="1"/>
</dbReference>
<dbReference type="NCBIfam" id="NF001986">
    <property type="entry name" value="PRK00779.1"/>
    <property type="match status" value="1"/>
</dbReference>
<dbReference type="PANTHER" id="PTHR45753">
    <property type="entry name" value="ORNITHINE CARBAMOYLTRANSFERASE, MITOCHONDRIAL"/>
    <property type="match status" value="1"/>
</dbReference>
<dbReference type="PANTHER" id="PTHR45753:SF3">
    <property type="entry name" value="ORNITHINE TRANSCARBAMYLASE, MITOCHONDRIAL"/>
    <property type="match status" value="1"/>
</dbReference>
<dbReference type="Pfam" id="PF00185">
    <property type="entry name" value="OTCace"/>
    <property type="match status" value="1"/>
</dbReference>
<dbReference type="Pfam" id="PF02729">
    <property type="entry name" value="OTCace_N"/>
    <property type="match status" value="1"/>
</dbReference>
<dbReference type="PRINTS" id="PR00100">
    <property type="entry name" value="AOTCASE"/>
</dbReference>
<dbReference type="PRINTS" id="PR00102">
    <property type="entry name" value="OTCASE"/>
</dbReference>
<dbReference type="SUPFAM" id="SSF53671">
    <property type="entry name" value="Aspartate/ornithine carbamoyltransferase"/>
    <property type="match status" value="1"/>
</dbReference>
<dbReference type="PROSITE" id="PS00097">
    <property type="entry name" value="CARBAMOYLTRANSFERASE"/>
    <property type="match status" value="1"/>
</dbReference>
<keyword id="KW-0028">Amino-acid biosynthesis</keyword>
<keyword id="KW-0055">Arginine biosynthesis</keyword>
<keyword id="KW-0963">Cytoplasm</keyword>
<keyword id="KW-1185">Reference proteome</keyword>
<keyword id="KW-0808">Transferase</keyword>
<gene>
    <name evidence="2" type="primary">argF</name>
    <name type="ordered locus">Saci_1408</name>
</gene>
<name>OTC_SULAC</name>
<feature type="chain" id="PRO_0000113076" description="Ornithine carbamoyltransferase">
    <location>
        <begin position="1"/>
        <end position="306"/>
    </location>
</feature>
<feature type="binding site" evidence="2">
    <location>
        <begin position="54"/>
        <end position="57"/>
    </location>
    <ligand>
        <name>carbamoyl phosphate</name>
        <dbReference type="ChEBI" id="CHEBI:58228"/>
    </ligand>
</feature>
<feature type="binding site" evidence="2">
    <location>
        <position position="81"/>
    </location>
    <ligand>
        <name>carbamoyl phosphate</name>
        <dbReference type="ChEBI" id="CHEBI:58228"/>
    </ligand>
</feature>
<feature type="binding site" evidence="2">
    <location>
        <position position="105"/>
    </location>
    <ligand>
        <name>carbamoyl phosphate</name>
        <dbReference type="ChEBI" id="CHEBI:58228"/>
    </ligand>
</feature>
<feature type="binding site" evidence="2">
    <location>
        <begin position="132"/>
        <end position="135"/>
    </location>
    <ligand>
        <name>carbamoyl phosphate</name>
        <dbReference type="ChEBI" id="CHEBI:58228"/>
    </ligand>
</feature>
<feature type="binding site" evidence="2">
    <location>
        <position position="162"/>
    </location>
    <ligand>
        <name>L-ornithine</name>
        <dbReference type="ChEBI" id="CHEBI:46911"/>
    </ligand>
</feature>
<feature type="binding site" evidence="2">
    <location>
        <position position="226"/>
    </location>
    <ligand>
        <name>L-ornithine</name>
        <dbReference type="ChEBI" id="CHEBI:46911"/>
    </ligand>
</feature>
<feature type="binding site" evidence="2">
    <location>
        <begin position="230"/>
        <end position="231"/>
    </location>
    <ligand>
        <name>L-ornithine</name>
        <dbReference type="ChEBI" id="CHEBI:46911"/>
    </ligand>
</feature>
<feature type="binding site" evidence="2">
    <location>
        <begin position="266"/>
        <end position="267"/>
    </location>
    <ligand>
        <name>carbamoyl phosphate</name>
        <dbReference type="ChEBI" id="CHEBI:58228"/>
    </ligand>
</feature>
<feature type="binding site" evidence="2">
    <location>
        <position position="294"/>
    </location>
    <ligand>
        <name>carbamoyl phosphate</name>
        <dbReference type="ChEBI" id="CHEBI:58228"/>
    </ligand>
</feature>
<organism>
    <name type="scientific">Sulfolobus acidocaldarius (strain ATCC 33909 / DSM 639 / JCM 8929 / NBRC 15157 / NCIMB 11770)</name>
    <dbReference type="NCBI Taxonomy" id="330779"/>
    <lineage>
        <taxon>Archaea</taxon>
        <taxon>Thermoproteota</taxon>
        <taxon>Thermoprotei</taxon>
        <taxon>Sulfolobales</taxon>
        <taxon>Sulfolobaceae</taxon>
        <taxon>Sulfolobus</taxon>
    </lineage>
</organism>
<sequence>MLKGKSLLTLLDFSNYEIESIINLSFSMKSFVNLNSVPKTLENKKIALIFEKPSTRTRISTELAVKLLGGTSIVLSKSDIQLGRGETVEDTARVLGRYVDGIGARVLNHNSLEILSKYSRKPVINLLSDVSHPLQALTDFMTVKERFGTYTNMAFIGDGTDNVLTSLMEFVSKMGLELRVASPKEFRPKQEVWRRIEEESEKSGAIIEFYEDPYEAVRGVKVVYTDVWVSMGQESIAEEKKKKLKDYKVTRDLMRYASKDAIFMHCLPAVRGEEVEDDVIDGHQSAVWDQAENRLYTAMAVLSLFI</sequence>
<proteinExistence type="inferred from homology"/>
<protein>
    <recommendedName>
        <fullName evidence="2">Ornithine carbamoyltransferase</fullName>
        <shortName evidence="2">OTCase</shortName>
        <ecNumber evidence="2">2.1.3.3</ecNumber>
    </recommendedName>
</protein>